<reference key="1">
    <citation type="journal article" date="2006" name="Nature">
        <title>The finished DNA sequence of human chromosome 12.</title>
        <authorList>
            <person name="Scherer S.E."/>
            <person name="Muzny D.M."/>
            <person name="Buhay C.J."/>
            <person name="Chen R."/>
            <person name="Cree A."/>
            <person name="Ding Y."/>
            <person name="Dugan-Rocha S."/>
            <person name="Gill R."/>
            <person name="Gunaratne P."/>
            <person name="Harris R.A."/>
            <person name="Hawes A.C."/>
            <person name="Hernandez J."/>
            <person name="Hodgson A.V."/>
            <person name="Hume J."/>
            <person name="Jackson A."/>
            <person name="Khan Z.M."/>
            <person name="Kovar-Smith C."/>
            <person name="Lewis L.R."/>
            <person name="Lozado R.J."/>
            <person name="Metzker M.L."/>
            <person name="Milosavljevic A."/>
            <person name="Miner G.R."/>
            <person name="Montgomery K.T."/>
            <person name="Morgan M.B."/>
            <person name="Nazareth L.V."/>
            <person name="Scott G."/>
            <person name="Sodergren E."/>
            <person name="Song X.-Z."/>
            <person name="Steffen D."/>
            <person name="Lovering R.C."/>
            <person name="Wheeler D.A."/>
            <person name="Worley K.C."/>
            <person name="Yuan Y."/>
            <person name="Zhang Z."/>
            <person name="Adams C.Q."/>
            <person name="Ansari-Lari M.A."/>
            <person name="Ayele M."/>
            <person name="Brown M.J."/>
            <person name="Chen G."/>
            <person name="Chen Z."/>
            <person name="Clerc-Blankenburg K.P."/>
            <person name="Davis C."/>
            <person name="Delgado O."/>
            <person name="Dinh H.H."/>
            <person name="Draper H."/>
            <person name="Gonzalez-Garay M.L."/>
            <person name="Havlak P."/>
            <person name="Jackson L.R."/>
            <person name="Jacob L.S."/>
            <person name="Kelly S.H."/>
            <person name="Li L."/>
            <person name="Li Z."/>
            <person name="Liu J."/>
            <person name="Liu W."/>
            <person name="Lu J."/>
            <person name="Maheshwari M."/>
            <person name="Nguyen B.-V."/>
            <person name="Okwuonu G.O."/>
            <person name="Pasternak S."/>
            <person name="Perez L.M."/>
            <person name="Plopper F.J.H."/>
            <person name="Santibanez J."/>
            <person name="Shen H."/>
            <person name="Tabor P.E."/>
            <person name="Verduzco D."/>
            <person name="Waldron L."/>
            <person name="Wang Q."/>
            <person name="Williams G.A."/>
            <person name="Zhang J."/>
            <person name="Zhou J."/>
            <person name="Allen C.C."/>
            <person name="Amin A.G."/>
            <person name="Anyalebechi V."/>
            <person name="Bailey M."/>
            <person name="Barbaria J.A."/>
            <person name="Bimage K.E."/>
            <person name="Bryant N.P."/>
            <person name="Burch P.E."/>
            <person name="Burkett C.E."/>
            <person name="Burrell K.L."/>
            <person name="Calderon E."/>
            <person name="Cardenas V."/>
            <person name="Carter K."/>
            <person name="Casias K."/>
            <person name="Cavazos I."/>
            <person name="Cavazos S.R."/>
            <person name="Ceasar H."/>
            <person name="Chacko J."/>
            <person name="Chan S.N."/>
            <person name="Chavez D."/>
            <person name="Christopoulos C."/>
            <person name="Chu J."/>
            <person name="Cockrell R."/>
            <person name="Cox C.D."/>
            <person name="Dang M."/>
            <person name="Dathorne S.R."/>
            <person name="David R."/>
            <person name="Davis C.M."/>
            <person name="Davy-Carroll L."/>
            <person name="Deshazo D.R."/>
            <person name="Donlin J.E."/>
            <person name="D'Souza L."/>
            <person name="Eaves K.A."/>
            <person name="Egan A."/>
            <person name="Emery-Cohen A.J."/>
            <person name="Escotto M."/>
            <person name="Flagg N."/>
            <person name="Forbes L.D."/>
            <person name="Gabisi A.M."/>
            <person name="Garza M."/>
            <person name="Hamilton C."/>
            <person name="Henderson N."/>
            <person name="Hernandez O."/>
            <person name="Hines S."/>
            <person name="Hogues M.E."/>
            <person name="Huang M."/>
            <person name="Idlebird D.G."/>
            <person name="Johnson R."/>
            <person name="Jolivet A."/>
            <person name="Jones S."/>
            <person name="Kagan R."/>
            <person name="King L.M."/>
            <person name="Leal B."/>
            <person name="Lebow H."/>
            <person name="Lee S."/>
            <person name="LeVan J.M."/>
            <person name="Lewis L.C."/>
            <person name="London P."/>
            <person name="Lorensuhewa L.M."/>
            <person name="Loulseged H."/>
            <person name="Lovett D.A."/>
            <person name="Lucier A."/>
            <person name="Lucier R.L."/>
            <person name="Ma J."/>
            <person name="Madu R.C."/>
            <person name="Mapua P."/>
            <person name="Martindale A.D."/>
            <person name="Martinez E."/>
            <person name="Massey E."/>
            <person name="Mawhiney S."/>
            <person name="Meador M.G."/>
            <person name="Mendez S."/>
            <person name="Mercado C."/>
            <person name="Mercado I.C."/>
            <person name="Merritt C.E."/>
            <person name="Miner Z.L."/>
            <person name="Minja E."/>
            <person name="Mitchell T."/>
            <person name="Mohabbat F."/>
            <person name="Mohabbat K."/>
            <person name="Montgomery B."/>
            <person name="Moore N."/>
            <person name="Morris S."/>
            <person name="Munidasa M."/>
            <person name="Ngo R.N."/>
            <person name="Nguyen N.B."/>
            <person name="Nickerson E."/>
            <person name="Nwaokelemeh O.O."/>
            <person name="Nwokenkwo S."/>
            <person name="Obregon M."/>
            <person name="Oguh M."/>
            <person name="Oragunye N."/>
            <person name="Oviedo R.J."/>
            <person name="Parish B.J."/>
            <person name="Parker D.N."/>
            <person name="Parrish J."/>
            <person name="Parks K.L."/>
            <person name="Paul H.A."/>
            <person name="Payton B.A."/>
            <person name="Perez A."/>
            <person name="Perrin W."/>
            <person name="Pickens A."/>
            <person name="Primus E.L."/>
            <person name="Pu L.-L."/>
            <person name="Puazo M."/>
            <person name="Quiles M.M."/>
            <person name="Quiroz J.B."/>
            <person name="Rabata D."/>
            <person name="Reeves K."/>
            <person name="Ruiz S.J."/>
            <person name="Shao H."/>
            <person name="Sisson I."/>
            <person name="Sonaike T."/>
            <person name="Sorelle R.P."/>
            <person name="Sutton A.E."/>
            <person name="Svatek A.F."/>
            <person name="Svetz L.A."/>
            <person name="Tamerisa K.S."/>
            <person name="Taylor T.R."/>
            <person name="Teague B."/>
            <person name="Thomas N."/>
            <person name="Thorn R.D."/>
            <person name="Trejos Z.Y."/>
            <person name="Trevino B.K."/>
            <person name="Ukegbu O.N."/>
            <person name="Urban J.B."/>
            <person name="Vasquez L.I."/>
            <person name="Vera V.A."/>
            <person name="Villasana D.M."/>
            <person name="Wang L."/>
            <person name="Ward-Moore S."/>
            <person name="Warren J.T."/>
            <person name="Wei X."/>
            <person name="White F."/>
            <person name="Williamson A.L."/>
            <person name="Wleczyk R."/>
            <person name="Wooden H.S."/>
            <person name="Wooden S.H."/>
            <person name="Yen J."/>
            <person name="Yoon L."/>
            <person name="Yoon V."/>
            <person name="Zorrilla S.E."/>
            <person name="Nelson D."/>
            <person name="Kucherlapati R."/>
            <person name="Weinstock G."/>
            <person name="Gibbs R.A."/>
        </authorList>
    </citation>
    <scope>NUCLEOTIDE SEQUENCE [LARGE SCALE GENOMIC DNA]</scope>
</reference>
<reference key="2">
    <citation type="journal article" date="1998" name="DNA Res.">
        <title>Prediction of the coding sequences of unidentified human genes. XI. The complete sequences of 100 new cDNA clones from brain which code for large proteins in vitro.</title>
        <authorList>
            <person name="Nagase T."/>
            <person name="Ishikawa K."/>
            <person name="Suyama M."/>
            <person name="Kikuno R."/>
            <person name="Miyajima N."/>
            <person name="Tanaka A."/>
            <person name="Kotani H."/>
            <person name="Nomura N."/>
            <person name="Ohara O."/>
        </authorList>
    </citation>
    <scope>NUCLEOTIDE SEQUENCE [LARGE SCALE MRNA] OF 34-711</scope>
    <source>
        <tissue>Brain</tissue>
    </source>
</reference>
<reference key="3">
    <citation type="journal article" date="2003" name="Biochem. Biophys. Res. Commun.">
        <title>Characterization of KIBRA, a novel WW domain-containing protein.</title>
        <authorList>
            <person name="Kremerskothen J."/>
            <person name="Plaas C."/>
            <person name="Buether K."/>
            <person name="Finger I."/>
            <person name="Veltel S."/>
            <person name="Matanis T."/>
            <person name="Liedtke T."/>
            <person name="Barnekow A."/>
        </authorList>
    </citation>
    <scope>INTERACTION WITH WWC1</scope>
    <source>
        <tissue>Brain</tissue>
    </source>
</reference>
<reference key="4">
    <citation type="journal article" date="2006" name="J. Biochem.">
        <title>CIN85 is localized at synapses and forms a complex with S-SCAM via dendrin.</title>
        <authorList>
            <person name="Kawata A."/>
            <person name="Iida J."/>
            <person name="Ikeda M."/>
            <person name="Sato Y."/>
            <person name="Mori H."/>
            <person name="Kansaku A."/>
            <person name="Sumita K."/>
            <person name="Fujiwara N."/>
            <person name="Rokukawa C."/>
            <person name="Hamano M."/>
            <person name="Hirabayashi S."/>
            <person name="Hata Y."/>
        </authorList>
    </citation>
    <scope>INTERACTION WITH MAGI1; MAGI2 AND SH3KBP1</scope>
</reference>
<reference key="5">
    <citation type="journal article" date="2006" name="J. Neurochem.">
        <title>Postsynaptic recruitment of Dendrin depends on both dendritic mRNA transport and synaptic anchoring.</title>
        <authorList>
            <person name="Kremerskothen J."/>
            <person name="Kindler S."/>
            <person name="Finger I."/>
            <person name="Veltel S."/>
            <person name="Barnekow A."/>
        </authorList>
    </citation>
    <scope>INTERACTION WITH ACTN1; MAGI1 AND MAGI2</scope>
    <scope>SUBCELLULAR LOCATION</scope>
</reference>
<reference key="6">
    <citation type="journal article" date="2007" name="J. Am. Soc. Nephrol.">
        <title>Expression and subcellular distribution of novel glomerulus-associated proteins Dendrin, Ehd3, Sh2d4a, Plekhh2, and 2310066E14Rik.</title>
        <authorList>
            <person name="Patrakka J."/>
            <person name="Xiao Z."/>
            <person name="Nukui M."/>
            <person name="Takemoto M."/>
            <person name="He L."/>
            <person name="Oddsson A."/>
            <person name="Perisic L."/>
            <person name="Kaukinen A."/>
            <person name="Szigyarto C.A.-K."/>
            <person name="Uhlen M."/>
            <person name="Jalanko H."/>
            <person name="Betsholtz C."/>
            <person name="Tryggvason K."/>
        </authorList>
    </citation>
    <scope>SUBCELLULAR LOCATION</scope>
    <scope>TISSUE SPECIFICITY</scope>
</reference>
<reference key="7">
    <citation type="journal article" date="2008" name="Nephrol. Dial. Transplant.">
        <title>Dendrin expression in glomerulogenesis and in human minimal change nephrotic syndrome.</title>
        <authorList>
            <person name="Duner F."/>
            <person name="Patrakka J."/>
            <person name="Xiao Z."/>
            <person name="Larsson J."/>
            <person name="Vlamis-Gardikas A."/>
            <person name="Pettersson E."/>
            <person name="Tryggvason K."/>
            <person name="Hultenby K."/>
            <person name="Wernerson A."/>
        </authorList>
    </citation>
    <scope>TISSUE SPECIFICITY</scope>
</reference>
<protein>
    <recommendedName>
        <fullName>Dendrin</fullName>
    </recommendedName>
</protein>
<feature type="chain" id="PRO_0000079861" description="Dendrin">
    <location>
        <begin position="1"/>
        <end position="711"/>
    </location>
</feature>
<feature type="region of interest" description="Disordered" evidence="4">
    <location>
        <begin position="1"/>
        <end position="22"/>
    </location>
</feature>
<feature type="region of interest" description="Disordered" evidence="4">
    <location>
        <begin position="49"/>
        <end position="273"/>
    </location>
</feature>
<feature type="region of interest" description="Nuclear localization" evidence="1">
    <location>
        <begin position="113"/>
        <end position="131"/>
    </location>
</feature>
<feature type="region of interest" description="Interaction with MAGI2">
    <location>
        <begin position="186"/>
        <end position="236"/>
    </location>
</feature>
<feature type="region of interest" description="Disordered" evidence="4">
    <location>
        <begin position="324"/>
        <end position="446"/>
    </location>
</feature>
<feature type="region of interest" description="Interaction with ACTN1" evidence="5">
    <location>
        <begin position="341"/>
        <end position="436"/>
    </location>
</feature>
<feature type="region of interest" description="Interaction with CD2AP and NPHS1" evidence="1">
    <location>
        <begin position="408"/>
        <end position="709"/>
    </location>
</feature>
<feature type="region of interest" description="Disordered" evidence="4">
    <location>
        <begin position="479"/>
        <end position="677"/>
    </location>
</feature>
<feature type="coiled-coil region" evidence="3">
    <location>
        <begin position="102"/>
        <end position="134"/>
    </location>
</feature>
<feature type="compositionally biased region" description="Pro residues" evidence="4">
    <location>
        <begin position="75"/>
        <end position="84"/>
    </location>
</feature>
<feature type="compositionally biased region" description="Basic and acidic residues" evidence="4">
    <location>
        <begin position="105"/>
        <end position="127"/>
    </location>
</feature>
<feature type="compositionally biased region" description="Low complexity" evidence="4">
    <location>
        <begin position="150"/>
        <end position="161"/>
    </location>
</feature>
<feature type="compositionally biased region" description="Low complexity" evidence="4">
    <location>
        <begin position="252"/>
        <end position="262"/>
    </location>
</feature>
<feature type="compositionally biased region" description="Low complexity" evidence="4">
    <location>
        <begin position="346"/>
        <end position="356"/>
    </location>
</feature>
<feature type="compositionally biased region" description="Basic and acidic residues" evidence="4">
    <location>
        <begin position="529"/>
        <end position="546"/>
    </location>
</feature>
<feature type="modified residue" description="Phosphoserine" evidence="2">
    <location>
        <position position="389"/>
    </location>
</feature>
<feature type="sequence variant" id="VAR_059651" description="In dbSNP:rs10783299.">
    <original>E</original>
    <variation>G</variation>
    <location>
        <position position="661"/>
    </location>
</feature>
<organism>
    <name type="scientific">Homo sapiens</name>
    <name type="common">Human</name>
    <dbReference type="NCBI Taxonomy" id="9606"/>
    <lineage>
        <taxon>Eukaryota</taxon>
        <taxon>Metazoa</taxon>
        <taxon>Chordata</taxon>
        <taxon>Craniata</taxon>
        <taxon>Vertebrata</taxon>
        <taxon>Euteleostomi</taxon>
        <taxon>Mammalia</taxon>
        <taxon>Eutheria</taxon>
        <taxon>Euarchontoglires</taxon>
        <taxon>Primates</taxon>
        <taxon>Haplorrhini</taxon>
        <taxon>Catarrhini</taxon>
        <taxon>Hominidae</taxon>
        <taxon>Homo</taxon>
    </lineage>
</organism>
<dbReference type="EMBL" id="AC011603">
    <property type="status" value="NOT_ANNOTATED_CDS"/>
    <property type="molecule type" value="Genomic_DNA"/>
</dbReference>
<dbReference type="EMBL" id="AB018292">
    <property type="protein sequence ID" value="BAA34469.1"/>
    <property type="status" value="ALT_INIT"/>
    <property type="molecule type" value="mRNA"/>
</dbReference>
<dbReference type="CCDS" id="CCDS31791.2"/>
<dbReference type="RefSeq" id="NP_055901.2">
    <property type="nucleotide sequence ID" value="NM_015086.2"/>
</dbReference>
<dbReference type="SMR" id="O94850"/>
<dbReference type="BioGRID" id="116733">
    <property type="interactions" value="7"/>
</dbReference>
<dbReference type="CORUM" id="O94850"/>
<dbReference type="FunCoup" id="O94850">
    <property type="interactions" value="40"/>
</dbReference>
<dbReference type="IntAct" id="O94850">
    <property type="interactions" value="7"/>
</dbReference>
<dbReference type="STRING" id="9606.ENSP00000390590"/>
<dbReference type="GlyGen" id="O94850">
    <property type="glycosylation" value="1 site"/>
</dbReference>
<dbReference type="iPTMnet" id="O94850"/>
<dbReference type="PhosphoSitePlus" id="O94850"/>
<dbReference type="BioMuta" id="DDN"/>
<dbReference type="jPOST" id="O94850"/>
<dbReference type="MassIVE" id="O94850"/>
<dbReference type="PaxDb" id="9606-ENSP00000390590"/>
<dbReference type="PeptideAtlas" id="O94850"/>
<dbReference type="ProteomicsDB" id="50479"/>
<dbReference type="Antibodypedia" id="74886">
    <property type="antibodies" value="12 antibodies from 5 providers"/>
</dbReference>
<dbReference type="DNASU" id="23109"/>
<dbReference type="Ensembl" id="ENST00000421952.3">
    <property type="protein sequence ID" value="ENSP00000390590.2"/>
    <property type="gene ID" value="ENSG00000181418.8"/>
</dbReference>
<dbReference type="GeneID" id="23109"/>
<dbReference type="KEGG" id="hsa:23109"/>
<dbReference type="MANE-Select" id="ENST00000421952.3">
    <property type="protein sequence ID" value="ENSP00000390590.2"/>
    <property type="RefSeq nucleotide sequence ID" value="NM_015086.2"/>
    <property type="RefSeq protein sequence ID" value="NP_055901.2"/>
</dbReference>
<dbReference type="UCSC" id="uc001rsv.2">
    <property type="organism name" value="human"/>
</dbReference>
<dbReference type="AGR" id="HGNC:24458"/>
<dbReference type="CTD" id="23109"/>
<dbReference type="DisGeNET" id="23109"/>
<dbReference type="GeneCards" id="DDN"/>
<dbReference type="HGNC" id="HGNC:24458">
    <property type="gene designation" value="DDN"/>
</dbReference>
<dbReference type="HPA" id="ENSG00000181418">
    <property type="expression patterns" value="Group enriched (brain, skeletal muscle)"/>
</dbReference>
<dbReference type="MIM" id="610588">
    <property type="type" value="gene"/>
</dbReference>
<dbReference type="neXtProt" id="NX_O94850"/>
<dbReference type="OpenTargets" id="ENSG00000181418"/>
<dbReference type="PharmGKB" id="PA134906790"/>
<dbReference type="VEuPathDB" id="HostDB:ENSG00000181418"/>
<dbReference type="eggNOG" id="ENOG502SA8Z">
    <property type="taxonomic scope" value="Eukaryota"/>
</dbReference>
<dbReference type="GeneTree" id="ENSGT00390000016495"/>
<dbReference type="HOGENOM" id="CLU_422079_0_0_1"/>
<dbReference type="InParanoid" id="O94850"/>
<dbReference type="OMA" id="TPQGNRE"/>
<dbReference type="OrthoDB" id="9900378at2759"/>
<dbReference type="PAN-GO" id="O94850">
    <property type="GO annotations" value="0 GO annotations based on evolutionary models"/>
</dbReference>
<dbReference type="PhylomeDB" id="O94850"/>
<dbReference type="TreeFam" id="TF337173"/>
<dbReference type="PathwayCommons" id="O94850"/>
<dbReference type="SignaLink" id="O94850"/>
<dbReference type="BioGRID-ORCS" id="23109">
    <property type="hits" value="158 hits in 1146 CRISPR screens"/>
</dbReference>
<dbReference type="CD-CODE" id="936CAA69">
    <property type="entry name" value="Slit diaphragm condensate"/>
</dbReference>
<dbReference type="ChiTaRS" id="DDN">
    <property type="organism name" value="human"/>
</dbReference>
<dbReference type="GenomeRNAi" id="23109"/>
<dbReference type="Pharos" id="O94850">
    <property type="development level" value="Tbio"/>
</dbReference>
<dbReference type="PRO" id="PR:O94850"/>
<dbReference type="Proteomes" id="UP000005640">
    <property type="component" value="Chromosome 12"/>
</dbReference>
<dbReference type="RNAct" id="O94850">
    <property type="molecule type" value="protein"/>
</dbReference>
<dbReference type="Bgee" id="ENSG00000181418">
    <property type="expression patterns" value="Expressed in gluteal muscle and 124 other cell types or tissues"/>
</dbReference>
<dbReference type="GO" id="GO:0042995">
    <property type="term" value="C:cell projection"/>
    <property type="evidence" value="ECO:0000314"/>
    <property type="project" value="UniProtKB"/>
</dbReference>
<dbReference type="GO" id="GO:0005737">
    <property type="term" value="C:cytoplasm"/>
    <property type="evidence" value="ECO:0000314"/>
    <property type="project" value="UniProtKB"/>
</dbReference>
<dbReference type="GO" id="GO:0032591">
    <property type="term" value="C:dendritic spine membrane"/>
    <property type="evidence" value="ECO:0007669"/>
    <property type="project" value="UniProtKB-SubCell"/>
</dbReference>
<dbReference type="GO" id="GO:0005789">
    <property type="term" value="C:endoplasmic reticulum membrane"/>
    <property type="evidence" value="ECO:0007669"/>
    <property type="project" value="UniProtKB-SubCell"/>
</dbReference>
<dbReference type="GO" id="GO:0005634">
    <property type="term" value="C:nucleus"/>
    <property type="evidence" value="ECO:0007669"/>
    <property type="project" value="UniProtKB-SubCell"/>
</dbReference>
<dbReference type="GO" id="GO:0043204">
    <property type="term" value="C:perikaryon"/>
    <property type="evidence" value="ECO:0007669"/>
    <property type="project" value="UniProtKB-SubCell"/>
</dbReference>
<dbReference type="GO" id="GO:0045211">
    <property type="term" value="C:postsynaptic membrane"/>
    <property type="evidence" value="ECO:0007669"/>
    <property type="project" value="UniProtKB-KW"/>
</dbReference>
<dbReference type="GO" id="GO:0098793">
    <property type="term" value="C:presynapse"/>
    <property type="evidence" value="ECO:0007669"/>
    <property type="project" value="Ensembl"/>
</dbReference>
<dbReference type="GO" id="GO:0000981">
    <property type="term" value="F:DNA-binding transcription factor activity, RNA polymerase II-specific"/>
    <property type="evidence" value="ECO:0007669"/>
    <property type="project" value="Ensembl"/>
</dbReference>
<dbReference type="GO" id="GO:0000978">
    <property type="term" value="F:RNA polymerase II cis-regulatory region sequence-specific DNA binding"/>
    <property type="evidence" value="ECO:0007669"/>
    <property type="project" value="Ensembl"/>
</dbReference>
<dbReference type="GO" id="GO:0045944">
    <property type="term" value="P:positive regulation of transcription by RNA polymerase II"/>
    <property type="evidence" value="ECO:0007669"/>
    <property type="project" value="Ensembl"/>
</dbReference>
<dbReference type="InterPro" id="IPR026500">
    <property type="entry name" value="Dendrin"/>
</dbReference>
<dbReference type="PANTHER" id="PTHR16757">
    <property type="entry name" value="DENDRIN"/>
    <property type="match status" value="1"/>
</dbReference>
<dbReference type="PANTHER" id="PTHR16757:SF1">
    <property type="entry name" value="DENDRIN"/>
    <property type="match status" value="1"/>
</dbReference>
<dbReference type="Pfam" id="PF15498">
    <property type="entry name" value="Dendrin"/>
    <property type="match status" value="1"/>
</dbReference>
<gene>
    <name type="primary">DDN</name>
    <name type="synonym">KIAA0749</name>
</gene>
<comment type="function">
    <text evidence="1">Promotes apoptosis of kidney glomerular podocytes. Podocytes are highly specialized cells essential to the ultrafiltration of blood, resulting in the extraction of urine and the retention of protein (By similarity).</text>
</comment>
<comment type="subunit">
    <text evidence="1">Forms a ternary complex with MAGI2 and SH3KBP1; recruits DDN to the cytoplasm. Interacts with MAGI1. Interacts with ACTN1 and may interact with WWC1. Interacts with the podocyte slit diaphragm proteins CD2AP, NPHS1 and NPHS2; the interaction with CD2AP and NPHS1 is direct (By similarity).</text>
</comment>
<comment type="interaction">
    <interactant intactId="EBI-5240523">
        <id>O94850</id>
    </interactant>
    <interactant intactId="EBI-346595">
        <id>Q96B97</id>
        <label>SH3KBP1</label>
    </interactant>
    <organismsDiffer>false</organismsDiffer>
    <experiments>5</experiments>
</comment>
<comment type="interaction">
    <interactant intactId="EBI-5240523">
        <id>O94850</id>
    </interactant>
    <interactant intactId="EBI-696179">
        <id>O88382</id>
        <label>Magi2</label>
    </interactant>
    <organismsDiffer>true</organismsDiffer>
    <experiments>3</experiments>
</comment>
<comment type="subcellular location">
    <subcellularLocation>
        <location>Cell projection</location>
        <location>Dendritic spine membrane</location>
        <topology>Peripheral membrane protein</topology>
    </subcellularLocation>
    <subcellularLocation>
        <location>Cytoplasm</location>
    </subcellularLocation>
    <subcellularLocation>
        <location evidence="1">Endoplasmic reticulum membrane</location>
        <topology evidence="1">Peripheral membrane protein</topology>
        <orientation evidence="1">Cytoplasmic side</orientation>
    </subcellularLocation>
    <subcellularLocation>
        <location evidence="1">Perikaryon</location>
    </subcellularLocation>
    <subcellularLocation>
        <location evidence="1">Nucleus</location>
    </subcellularLocation>
    <text evidence="1">Enriched at the cytoplasmic insertion of the slit diaphragm into the foot process of podocytes and associated with polyribosomes in dendrites.</text>
</comment>
<comment type="tissue specificity">
    <text evidence="6 7">Specifically expressed in brain and kidney. Expressed in kidney glomerular capillary loops (at protein level).</text>
</comment>
<comment type="sequence caution" evidence="8">
    <conflict type="erroneous initiation">
        <sequence resource="EMBL-CDS" id="BAA34469"/>
    </conflict>
</comment>
<proteinExistence type="evidence at protein level"/>
<name>DEND_HUMAN</name>
<keyword id="KW-1003">Cell membrane</keyword>
<keyword id="KW-0966">Cell projection</keyword>
<keyword id="KW-0175">Coiled coil</keyword>
<keyword id="KW-0963">Cytoplasm</keyword>
<keyword id="KW-0256">Endoplasmic reticulum</keyword>
<keyword id="KW-0472">Membrane</keyword>
<keyword id="KW-0539">Nucleus</keyword>
<keyword id="KW-0597">Phosphoprotein</keyword>
<keyword id="KW-0628">Postsynaptic cell membrane</keyword>
<keyword id="KW-1267">Proteomics identification</keyword>
<keyword id="KW-1185">Reference proteome</keyword>
<keyword id="KW-0770">Synapse</keyword>
<evidence type="ECO:0000250" key="1"/>
<evidence type="ECO:0000250" key="2">
    <source>
        <dbReference type="UniProtKB" id="Q80TS7"/>
    </source>
</evidence>
<evidence type="ECO:0000255" key="3"/>
<evidence type="ECO:0000256" key="4">
    <source>
        <dbReference type="SAM" id="MobiDB-lite"/>
    </source>
</evidence>
<evidence type="ECO:0000269" key="5">
    <source>
    </source>
</evidence>
<evidence type="ECO:0000269" key="6">
    <source>
    </source>
</evidence>
<evidence type="ECO:0000269" key="7">
    <source>
    </source>
</evidence>
<evidence type="ECO:0000305" key="8"/>
<accession>O94850</accession>
<sequence length="711" mass="75996">MLDGPLFSEGPDSPRELQDEESGSCLWVQKSKLLVIEVKTISCHYSRRAPSRQPMDFQASHWARGFQNRTCGPRPGSPQPPPRRPWASRVLQEATNWRAGPLAEVRAREQEKRKAASQEREAKETERKRRKAGGARRSPPGRPRPEPRNAPRVAQLAGLPAPLRPERLAPVGRAPRPSAQPQSDPGSAWAGPWGGRRPGPPSYEAHLLLRGSAGTAPRRRWDRPPPYVAPPSYEGPHRTLGTKRGPGNSQVPTSSAPAATPARTDGGRTKKRLDPRIYRDVLGAWGLRQGQGLLGGSPGCGAARARPEPGKGVVEKSLGLAAADLNSGSDSHPQAKATGSAGTEIAPAGSATAAPCAPHPAPRSRHHLKGSREGKEGEQIWFPKCWIPSPKKQPPRHSQTLPRPWAPGGTGWRESLGLGEGAGPETLEGWKATRRAHTLPRSSQGLSRGEGVFVIDATCVVIRSQYVPTPRTQQVQLLPSGVTRVVGDSPSQSKPGKEEGEGATVFPSPCQKRLSSSRLLHQPGGGRGGEAEGGRPGDSTLEERTFRILGLPAPEVNLRDAPTQPGSPEHQALGPAASGAQGRAEGSEVAVVQRRAGRGWARTPGPYAGALREAVSRIRRHTAPDSDTDEAEELSVHSGSSDGSDTEAPGASWRNERTLPEVGNSSPEEDGKTAELSDSVGEILDVISQTEEVLFGVRDIRGTQQGNRKRQ</sequence>